<accession>Q5AMG5</accession>
<accession>A0A1D8PL69</accession>
<proteinExistence type="inferred from homology"/>
<feature type="initiator methionine" description="Removed" evidence="1">
    <location>
        <position position="1"/>
    </location>
</feature>
<feature type="chain" id="PRO_0000249920" description="5'-3' exoribonuclease 2">
    <location>
        <begin position="2"/>
        <end position="968"/>
    </location>
</feature>
<feature type="region of interest" description="Disordered" evidence="5">
    <location>
        <begin position="498"/>
        <end position="538"/>
    </location>
</feature>
<feature type="region of interest" description="Disordered" evidence="5">
    <location>
        <begin position="873"/>
        <end position="968"/>
    </location>
</feature>
<feature type="coiled-coil region" evidence="4">
    <location>
        <begin position="113"/>
        <end position="140"/>
    </location>
</feature>
<feature type="coiled-coil region" evidence="4">
    <location>
        <begin position="387"/>
        <end position="416"/>
    </location>
</feature>
<feature type="compositionally biased region" description="Low complexity" evidence="5">
    <location>
        <begin position="498"/>
        <end position="510"/>
    </location>
</feature>
<feature type="compositionally biased region" description="Basic and acidic residues" evidence="5">
    <location>
        <begin position="521"/>
        <end position="538"/>
    </location>
</feature>
<feature type="compositionally biased region" description="Polar residues" evidence="5">
    <location>
        <begin position="882"/>
        <end position="893"/>
    </location>
</feature>
<feature type="compositionally biased region" description="Low complexity" evidence="5">
    <location>
        <begin position="902"/>
        <end position="959"/>
    </location>
</feature>
<reference key="1">
    <citation type="journal article" date="2004" name="Proc. Natl. Acad. Sci. U.S.A.">
        <title>The diploid genome sequence of Candida albicans.</title>
        <authorList>
            <person name="Jones T."/>
            <person name="Federspiel N.A."/>
            <person name="Chibana H."/>
            <person name="Dungan J."/>
            <person name="Kalman S."/>
            <person name="Magee B.B."/>
            <person name="Newport G."/>
            <person name="Thorstenson Y.R."/>
            <person name="Agabian N."/>
            <person name="Magee P.T."/>
            <person name="Davis R.W."/>
            <person name="Scherer S."/>
        </authorList>
    </citation>
    <scope>NUCLEOTIDE SEQUENCE [LARGE SCALE GENOMIC DNA]</scope>
    <source>
        <strain>SC5314 / ATCC MYA-2876</strain>
    </source>
</reference>
<reference key="2">
    <citation type="journal article" date="2007" name="Genome Biol.">
        <title>Assembly of the Candida albicans genome into sixteen supercontigs aligned on the eight chromosomes.</title>
        <authorList>
            <person name="van het Hoog M."/>
            <person name="Rast T.J."/>
            <person name="Martchenko M."/>
            <person name="Grindle S."/>
            <person name="Dignard D."/>
            <person name="Hogues H."/>
            <person name="Cuomo C."/>
            <person name="Berriman M."/>
            <person name="Scherer S."/>
            <person name="Magee B.B."/>
            <person name="Whiteway M."/>
            <person name="Chibana H."/>
            <person name="Nantel A."/>
            <person name="Magee P.T."/>
        </authorList>
    </citation>
    <scope>GENOME REANNOTATION</scope>
    <source>
        <strain>SC5314 / ATCC MYA-2876</strain>
    </source>
</reference>
<reference key="3">
    <citation type="journal article" date="2013" name="Genome Biol.">
        <title>Assembly of a phased diploid Candida albicans genome facilitates allele-specific measurements and provides a simple model for repeat and indel structure.</title>
        <authorList>
            <person name="Muzzey D."/>
            <person name="Schwartz K."/>
            <person name="Weissman J.S."/>
            <person name="Sherlock G."/>
        </authorList>
    </citation>
    <scope>NUCLEOTIDE SEQUENCE [LARGE SCALE GENOMIC DNA]</scope>
    <scope>GENOME REANNOTATION</scope>
    <source>
        <strain>SC5314 / ATCC MYA-2876</strain>
    </source>
</reference>
<name>XRN2_CANAL</name>
<dbReference type="EC" id="3.1.13.-"/>
<dbReference type="EMBL" id="CP017626">
    <property type="protein sequence ID" value="AOW28895.1"/>
    <property type="molecule type" value="Genomic_DNA"/>
</dbReference>
<dbReference type="RefSeq" id="XP_722750.2">
    <property type="nucleotide sequence ID" value="XM_717657.2"/>
</dbReference>
<dbReference type="SMR" id="Q5AMG5"/>
<dbReference type="FunCoup" id="Q5AMG5">
    <property type="interactions" value="1139"/>
</dbReference>
<dbReference type="STRING" id="237561.Q5AMG5"/>
<dbReference type="EnsemblFungi" id="C4_01080W_A-T">
    <property type="protein sequence ID" value="C4_01080W_A-T-p1"/>
    <property type="gene ID" value="C4_01080W_A"/>
</dbReference>
<dbReference type="GeneID" id="3635686"/>
<dbReference type="KEGG" id="cal:CAALFM_C401080WA"/>
<dbReference type="CGD" id="CAL0000180194">
    <property type="gene designation" value="RAT1"/>
</dbReference>
<dbReference type="VEuPathDB" id="FungiDB:C4_01080W_A"/>
<dbReference type="eggNOG" id="KOG2044">
    <property type="taxonomic scope" value="Eukaryota"/>
</dbReference>
<dbReference type="HOGENOM" id="CLU_006038_1_1_1"/>
<dbReference type="InParanoid" id="Q5AMG5"/>
<dbReference type="OMA" id="WVALYYY"/>
<dbReference type="OrthoDB" id="28245at2759"/>
<dbReference type="PRO" id="PR:Q5AMG5"/>
<dbReference type="Proteomes" id="UP000000559">
    <property type="component" value="Chromosome 4"/>
</dbReference>
<dbReference type="GO" id="GO:0090730">
    <property type="term" value="C:Las1 complex"/>
    <property type="evidence" value="ECO:0007669"/>
    <property type="project" value="EnsemblFungi"/>
</dbReference>
<dbReference type="GO" id="GO:0005634">
    <property type="term" value="C:nucleus"/>
    <property type="evidence" value="ECO:0000318"/>
    <property type="project" value="GO_Central"/>
</dbReference>
<dbReference type="GO" id="GO:0110103">
    <property type="term" value="C:RNA polymerase II termination complex"/>
    <property type="evidence" value="ECO:0007669"/>
    <property type="project" value="EnsemblFungi"/>
</dbReference>
<dbReference type="GO" id="GO:0004534">
    <property type="term" value="F:5'-3' RNA exonuclease activity"/>
    <property type="evidence" value="ECO:0000316"/>
    <property type="project" value="CGD"/>
</dbReference>
<dbReference type="GO" id="GO:0000150">
    <property type="term" value="F:DNA strand exchange activity"/>
    <property type="evidence" value="ECO:0000316"/>
    <property type="project" value="CGD"/>
</dbReference>
<dbReference type="GO" id="GO:0008017">
    <property type="term" value="F:microtubule binding"/>
    <property type="evidence" value="ECO:0000316"/>
    <property type="project" value="CGD"/>
</dbReference>
<dbReference type="GO" id="GO:0003723">
    <property type="term" value="F:RNA binding"/>
    <property type="evidence" value="ECO:0000318"/>
    <property type="project" value="GO_Central"/>
</dbReference>
<dbReference type="GO" id="GO:0019843">
    <property type="term" value="F:rRNA binding"/>
    <property type="evidence" value="ECO:0007669"/>
    <property type="project" value="EnsemblFungi"/>
</dbReference>
<dbReference type="GO" id="GO:0000448">
    <property type="term" value="P:cleavage in ITS2 between 5.8S rRNA and LSU-rRNA of tricistronic rRNA transcript (SSU-rRNA, 5.8S rRNA, LSU-rRNA)"/>
    <property type="evidence" value="ECO:0007669"/>
    <property type="project" value="EnsemblFungi"/>
</dbReference>
<dbReference type="GO" id="GO:0000398">
    <property type="term" value="P:mRNA splicing, via spliceosome"/>
    <property type="evidence" value="ECO:0007669"/>
    <property type="project" value="EnsemblFungi"/>
</dbReference>
<dbReference type="GO" id="GO:0110155">
    <property type="term" value="P:NAD-cap decapping"/>
    <property type="evidence" value="ECO:0007669"/>
    <property type="project" value="EnsemblFungi"/>
</dbReference>
<dbReference type="GO" id="GO:0034244">
    <property type="term" value="P:negative regulation of transcription elongation by RNA polymerase II"/>
    <property type="evidence" value="ECO:0007669"/>
    <property type="project" value="EnsemblFungi"/>
</dbReference>
<dbReference type="GO" id="GO:0071028">
    <property type="term" value="P:nuclear mRNA surveillance"/>
    <property type="evidence" value="ECO:0007669"/>
    <property type="project" value="EnsemblFungi"/>
</dbReference>
<dbReference type="GO" id="GO:0071035">
    <property type="term" value="P:nuclear polyadenylation-dependent rRNA catabolic process"/>
    <property type="evidence" value="ECO:0007669"/>
    <property type="project" value="EnsemblFungi"/>
</dbReference>
<dbReference type="GO" id="GO:0000956">
    <property type="term" value="P:nuclear-transcribed mRNA catabolic process"/>
    <property type="evidence" value="ECO:0000318"/>
    <property type="project" value="GO_Central"/>
</dbReference>
<dbReference type="GO" id="GO:1904595">
    <property type="term" value="P:positive regulation of termination of RNA polymerase II transcription"/>
    <property type="evidence" value="ECO:0007669"/>
    <property type="project" value="EnsemblFungi"/>
</dbReference>
<dbReference type="GO" id="GO:0043144">
    <property type="term" value="P:sno(s)RNA processing"/>
    <property type="evidence" value="ECO:0007669"/>
    <property type="project" value="EnsemblFungi"/>
</dbReference>
<dbReference type="GO" id="GO:0030847">
    <property type="term" value="P:termination of RNA polymerase II transcription, exosome-dependent"/>
    <property type="evidence" value="ECO:0007669"/>
    <property type="project" value="EnsemblFungi"/>
</dbReference>
<dbReference type="GO" id="GO:0030846">
    <property type="term" value="P:termination of RNA polymerase II transcription, poly(A)-coupled"/>
    <property type="evidence" value="ECO:0007669"/>
    <property type="project" value="EnsemblFungi"/>
</dbReference>
<dbReference type="CDD" id="cd18673">
    <property type="entry name" value="PIN_XRN1-2-like"/>
    <property type="match status" value="1"/>
</dbReference>
<dbReference type="FunFam" id="1.25.40.1050:FF:000002">
    <property type="entry name" value="5'-3' exoribonuclease"/>
    <property type="match status" value="1"/>
</dbReference>
<dbReference type="FunFam" id="3.40.50.12390:FF:000003">
    <property type="entry name" value="5'-3' exoribonuclease"/>
    <property type="match status" value="1"/>
</dbReference>
<dbReference type="FunFam" id="3.40.50.12390:FF:000005">
    <property type="entry name" value="5'-3' exoribonuclease 2"/>
    <property type="match status" value="1"/>
</dbReference>
<dbReference type="Gene3D" id="1.25.40.1050">
    <property type="match status" value="1"/>
</dbReference>
<dbReference type="Gene3D" id="3.40.50.12390">
    <property type="match status" value="2"/>
</dbReference>
<dbReference type="InterPro" id="IPR027073">
    <property type="entry name" value="5_3_exoribonuclease"/>
</dbReference>
<dbReference type="InterPro" id="IPR041412">
    <property type="entry name" value="Xrn1_helical"/>
</dbReference>
<dbReference type="InterPro" id="IPR004859">
    <property type="entry name" value="Xrn1_N"/>
</dbReference>
<dbReference type="InterPro" id="IPR017151">
    <property type="entry name" value="Xrn2/3/4"/>
</dbReference>
<dbReference type="PANTHER" id="PTHR12341:SF41">
    <property type="entry name" value="5'-3' EXORIBONUCLEASE 2"/>
    <property type="match status" value="1"/>
</dbReference>
<dbReference type="PANTHER" id="PTHR12341">
    <property type="entry name" value="5'-&gt;3' EXORIBONUCLEASE"/>
    <property type="match status" value="1"/>
</dbReference>
<dbReference type="Pfam" id="PF17846">
    <property type="entry name" value="XRN_M"/>
    <property type="match status" value="1"/>
</dbReference>
<dbReference type="Pfam" id="PF03159">
    <property type="entry name" value="XRN_N"/>
    <property type="match status" value="1"/>
</dbReference>
<dbReference type="PIRSF" id="PIRSF037239">
    <property type="entry name" value="Exonuclease_Xrn2"/>
    <property type="match status" value="1"/>
</dbReference>
<sequence length="968" mass="111689">MGVPALFRWLSRKYPKIISPVVEEEDHEIGGAKYENPNPNGEIDNLYLDMNGIVHPCSHPEHKKPPETEDEMFLDIFKYTDRVLMMARPRKVLMIAVDGVAPRAKMNQQRARRFRAAKDAELKAKQLEIEVQERELRGEIINDAIKGKKQWDSNAITPGTPFMDRLAEALRYWVAYKLSSDPGWANLQVIISDATVPGEGEHKLMSFIRSQRSDPQYDPNTKHCIYGLDADLIFLGLATHEPHFRVLREDVFASQDKKFTIKDQIADANSNGDTVAKEDKKPFLWLHVNVLREYLQVELFTPRMSFPFELERAIDDWVFLCFFAGNDFLPHLPSLDVRDNGIDTLVQCWKRSLPILKDYVTCDGKLNLKSVEVLMSNLAYKESEIFKNKHAAEQRREENNKRRKLAQEQERALKRVYSSQVSKGKDKAPLTADVNMPLMDTSGQNVEGYANLTNSDIVQNRAILTKANLANSDAAAELKKLIDSKKTQVTVVQDQIATDSSANSETTTSESELEEIQSDNSLKRKLEPEEDKQTQSDDIKLWEPGYNKRYYEAKFHCQSDEEIEQTKRDVVRHYVEGIAWVALYYYQGCPSWNWYFPYHYAPFAADFTNLEELFPEGVKFKLGEPFRPFEQLMSVLPAASGHTLPQVFRDLMSNPDSEIIDFYPEEFEIDMNGKKMSWQGIPLLPFIDEKRLLDAVQKKYELLTPDEKSRNTNKEAELFISPANKNFSKFSEKLYKENENEVTFKYAKSGLSGKIFKLGTFNPEGVFNFPLNEGYMPNVNNSDYFQAIYHFPKTKTGKSMILNGHIAPLPALTTADKNDLLYQLDKFNNRRNGGRFNSTLDNSDYINKGPAGKELYKTYSMRRGGYRSYLQYLTNGHHPDHQSQNSQYLSYGQQKPYGGQGSYNQQGYYNQQGRYNQQGNNYNQQGRYSQQSQYNQYRSNTQRFNNNQNYNQSSNNSRSGYLPPRPQR</sequence>
<gene>
    <name type="primary">RAT1</name>
    <name type="ordered locus">CAALFM_C401080WA</name>
    <name type="ORF">CaO19.12150</name>
    <name type="ORF">CaO19.4681</name>
</gene>
<organism>
    <name type="scientific">Candida albicans (strain SC5314 / ATCC MYA-2876)</name>
    <name type="common">Yeast</name>
    <dbReference type="NCBI Taxonomy" id="237561"/>
    <lineage>
        <taxon>Eukaryota</taxon>
        <taxon>Fungi</taxon>
        <taxon>Dikarya</taxon>
        <taxon>Ascomycota</taxon>
        <taxon>Saccharomycotina</taxon>
        <taxon>Pichiomycetes</taxon>
        <taxon>Debaryomycetaceae</taxon>
        <taxon>Candida/Lodderomyces clade</taxon>
        <taxon>Candida</taxon>
    </lineage>
</organism>
<keyword id="KW-0175">Coiled coil</keyword>
<keyword id="KW-0269">Exonuclease</keyword>
<keyword id="KW-0378">Hydrolase</keyword>
<keyword id="KW-0507">mRNA processing</keyword>
<keyword id="KW-0540">Nuclease</keyword>
<keyword id="KW-0539">Nucleus</keyword>
<keyword id="KW-1185">Reference proteome</keyword>
<keyword id="KW-0698">rRNA processing</keyword>
<keyword id="KW-0804">Transcription</keyword>
<keyword id="KW-0805">Transcription regulation</keyword>
<keyword id="KW-0806">Transcription termination</keyword>
<evidence type="ECO:0000250" key="1"/>
<evidence type="ECO:0000250" key="2">
    <source>
        <dbReference type="UniProtKB" id="P40848"/>
    </source>
</evidence>
<evidence type="ECO:0000250" key="3">
    <source>
        <dbReference type="UniProtKB" id="Q02792"/>
    </source>
</evidence>
<evidence type="ECO:0000255" key="4"/>
<evidence type="ECO:0000256" key="5">
    <source>
        <dbReference type="SAM" id="MobiDB-lite"/>
    </source>
</evidence>
<evidence type="ECO:0000305" key="6"/>
<comment type="function">
    <text evidence="2 3">Possesses 5'-&gt;3' exoribonuclease activity (By similarity). Required for the processing of nuclear mRNA and rRNA precursors. May promote the termination of transcription by RNA polymerase II (By similarity). Essential for vegetative cell growth and chromosome segregation (By similarity).</text>
</comment>
<comment type="subunit">
    <text evidence="2">Interacts with RAI1; the interaction is direct, stabilizes RAT1 protein structure and may stimulate its exoribonuclease activity (By similarity). The interaction also stimulates RAI1 pyrophosphohydrolase activity, probably by recruiting it to mRNA substrates (By similarity).</text>
</comment>
<comment type="subcellular location">
    <subcellularLocation>
        <location evidence="1">Nucleus</location>
    </subcellularLocation>
</comment>
<comment type="similarity">
    <text evidence="6">Belongs to the 5'-3' exonuclease family. XRN2/RAT1 subfamily.</text>
</comment>
<protein>
    <recommendedName>
        <fullName>5'-3' exoribonuclease 2</fullName>
        <ecNumber>3.1.13.-</ecNumber>
    </recommendedName>
</protein>